<organismHost>
    <name type="scientific">Dactylis glomerata</name>
    <name type="common">Orchard grass</name>
    <name type="synonym">Cock's-foot grass</name>
    <dbReference type="NCBI Taxonomy" id="4509"/>
</organismHost>
<organismHost>
    <name type="scientific">Triticum aestivum</name>
    <name type="common">Wheat</name>
    <dbReference type="NCBI Taxonomy" id="4565"/>
</organismHost>
<evidence type="ECO:0000250" key="1"/>
<evidence type="ECO:0000256" key="2">
    <source>
        <dbReference type="SAM" id="MobiDB-lite"/>
    </source>
</evidence>
<evidence type="ECO:0000305" key="3"/>
<name>CAPSD_CFMVN</name>
<proteinExistence type="evidence at protein level"/>
<accession>Q66012</accession>
<accession>Q0PW23</accession>
<keyword id="KW-0167">Capsid protein</keyword>
<keyword id="KW-0903">Direct protein sequencing</keyword>
<keyword id="KW-1185">Reference proteome</keyword>
<keyword id="KW-0694">RNA-binding</keyword>
<keyword id="KW-1142">T=3 icosahedral capsid protein</keyword>
<keyword id="KW-0946">Virion</keyword>
<protein>
    <recommendedName>
        <fullName>Capsid protein</fullName>
        <shortName>CP</shortName>
    </recommendedName>
    <alternativeName>
        <fullName>Coat protein</fullName>
    </alternativeName>
    <alternativeName>
        <fullName>Protein P4</fullName>
    </alternativeName>
</protein>
<sequence length="254" mass="27610">MMVRKGAATKAPQQPKPKAQQQPGGRRRRRGRSMEPVSRPLNPPAAVGSTLKAGRGRTAGVSDWFDTGMITSYLGGFQRTAGTTDSQVFIVSPAALDRVGTIAKAYALWRPKHWEIVYLPRCSTQTDGSIEMGFLLDYADSVPTNTRTMASSTSFTTSNVWGGGDGSSLLHTSVKSMGNAVTSALPCDEFSNKWFKLSWSTPEESENAHLTDTYVPARFVVRSDFPVVTADQPGHLWLRSRILLKGSVSPSTNL</sequence>
<gene>
    <name type="ORF">ORF3</name>
</gene>
<feature type="chain" id="PRO_0000409863" description="Capsid protein">
    <location>
        <begin position="1"/>
        <end position="254"/>
    </location>
</feature>
<feature type="region of interest" description="R domain, interaction with RNA" evidence="1">
    <location>
        <begin position="1"/>
        <end position="61"/>
    </location>
</feature>
<feature type="region of interest" description="Disordered" evidence="2">
    <location>
        <begin position="1"/>
        <end position="53"/>
    </location>
</feature>
<feature type="region of interest" description="S domain, virion shell" evidence="1">
    <location>
        <begin position="62"/>
        <end position="245"/>
    </location>
</feature>
<feature type="region of interest" description="P domain, projecting" evidence="1">
    <location>
        <begin position="246"/>
        <end position="254"/>
    </location>
</feature>
<feature type="compositionally biased region" description="Low complexity" evidence="2">
    <location>
        <begin position="1"/>
        <end position="24"/>
    </location>
</feature>
<feature type="sequence conflict" description="In Ref. 2; ABG73620." evidence="3" ref="2">
    <original>V</original>
    <variation>M</variation>
    <location>
        <position position="174"/>
    </location>
</feature>
<dbReference type="EMBL" id="Z48630">
    <property type="protein sequence ID" value="CAA88562.1"/>
    <property type="molecule type" value="Genomic_RNA"/>
</dbReference>
<dbReference type="EMBL" id="DQ680848">
    <property type="protein sequence ID" value="ABG73620.1"/>
    <property type="molecule type" value="Genomic_RNA"/>
</dbReference>
<dbReference type="RefSeq" id="NP_941377.1">
    <property type="nucleotide sequence ID" value="NC_002618.2"/>
</dbReference>
<dbReference type="SMR" id="Q66012"/>
<dbReference type="KEGG" id="vg:2654594"/>
<dbReference type="Proteomes" id="UP000001461">
    <property type="component" value="Segment"/>
</dbReference>
<dbReference type="Proteomes" id="UP000008994">
    <property type="component" value="Segment"/>
</dbReference>
<dbReference type="GO" id="GO:0039617">
    <property type="term" value="C:T=3 icosahedral viral capsid"/>
    <property type="evidence" value="ECO:0007669"/>
    <property type="project" value="UniProtKB-KW"/>
</dbReference>
<dbReference type="GO" id="GO:0003723">
    <property type="term" value="F:RNA binding"/>
    <property type="evidence" value="ECO:0007669"/>
    <property type="project" value="UniProtKB-KW"/>
</dbReference>
<dbReference type="GO" id="GO:0005198">
    <property type="term" value="F:structural molecule activity"/>
    <property type="evidence" value="ECO:0007669"/>
    <property type="project" value="InterPro"/>
</dbReference>
<dbReference type="Gene3D" id="2.60.120.20">
    <property type="match status" value="1"/>
</dbReference>
<dbReference type="InterPro" id="IPR000937">
    <property type="entry name" value="Capsid_prot_S-dom_vir"/>
</dbReference>
<dbReference type="InterPro" id="IPR029053">
    <property type="entry name" value="Viral_coat"/>
</dbReference>
<dbReference type="Pfam" id="PF00729">
    <property type="entry name" value="Viral_coat"/>
    <property type="match status" value="1"/>
</dbReference>
<dbReference type="SUPFAM" id="SSF88633">
    <property type="entry name" value="Positive stranded ssRNA viruses"/>
    <property type="match status" value="1"/>
</dbReference>
<dbReference type="PROSITE" id="PS00555">
    <property type="entry name" value="ICOSAH_VIR_COAT_S"/>
    <property type="match status" value="1"/>
</dbReference>
<organism>
    <name type="scientific">Cocksfoot mottle virus (isolate Dactylis glomerata/Norway/CfMV-NO/1995)</name>
    <name type="common">CfMV</name>
    <dbReference type="NCBI Taxonomy" id="1005059"/>
    <lineage>
        <taxon>Viruses</taxon>
        <taxon>Riboviria</taxon>
        <taxon>Orthornavirae</taxon>
        <taxon>Pisuviricota</taxon>
        <taxon>Pisoniviricetes</taxon>
        <taxon>Sobelivirales</taxon>
        <taxon>Solemoviridae</taxon>
        <taxon>Sobemovirus</taxon>
        <taxon>Cocksfoot mottle virus</taxon>
    </lineage>
</organism>
<comment type="function">
    <text evidence="3">Capsid protein self-assembles to form an icosahedral capsid with a T=3 symmetry, about 30 nm in diameter, and consisting of 180 capsid proteins. Each icosahedral unit contains three protein subunits (Potential).</text>
</comment>
<comment type="subcellular location">
    <subcellularLocation>
        <location evidence="3">Virion</location>
    </subcellularLocation>
</comment>
<comment type="similarity">
    <text evidence="3">Belongs to the icosahedral plant coat protein family.</text>
</comment>
<reference key="1">
    <citation type="journal article" date="1995" name="J. Gen. Virol.">
        <title>Characterization of cocksfoot mottle sobemovirus genomic RNA and sequence comparison with related viruses.</title>
        <authorList>
            <person name="Maekinen K."/>
            <person name="Tamm T."/>
            <person name="Naess V."/>
            <person name="Truve E."/>
            <person name="Puurand U."/>
            <person name="Munthe T."/>
            <person name="Saarma M."/>
        </authorList>
    </citation>
    <scope>NUCLEOTIDE SEQUENCE [GENOMIC RNA]</scope>
    <scope>PROTEIN SEQUENCE OF 3-19</scope>
</reference>
<reference key="2">
    <citation type="journal article" date="2006" name="Virus Genes">
        <title>P1 protein of Cocksfoot mottle virus is indispensable for the systemic spread of the virus.</title>
        <authorList>
            <person name="Meier M."/>
            <person name="Paves H."/>
            <person name="Olspert A."/>
            <person name="Tamm T."/>
            <person name="Truve E."/>
        </authorList>
    </citation>
    <scope>NUCLEOTIDE SEQUENCE [GENOMIC RNA]</scope>
</reference>